<evidence type="ECO:0000255" key="1">
    <source>
        <dbReference type="HAMAP-Rule" id="MF_00584"/>
    </source>
</evidence>
<name>Y1344_SULAC</name>
<keyword id="KW-0238">DNA-binding</keyword>
<keyword id="KW-1185">Reference proteome</keyword>
<keyword id="KW-0804">Transcription</keyword>
<keyword id="KW-0805">Transcription regulation</keyword>
<accession>Q4J946</accession>
<protein>
    <recommendedName>
        <fullName evidence="1">Putative HTH-type transcriptional regulatory protein Saci_1344</fullName>
    </recommendedName>
</protein>
<dbReference type="EMBL" id="CP000077">
    <property type="protein sequence ID" value="AAY80679.1"/>
    <property type="molecule type" value="Genomic_DNA"/>
</dbReference>
<dbReference type="RefSeq" id="WP_011278181.1">
    <property type="nucleotide sequence ID" value="NC_007181.1"/>
</dbReference>
<dbReference type="SMR" id="Q4J946"/>
<dbReference type="STRING" id="330779.Saci_1344"/>
<dbReference type="GeneID" id="14551847"/>
<dbReference type="KEGG" id="sai:Saci_1344"/>
<dbReference type="PATRIC" id="fig|330779.12.peg.1297"/>
<dbReference type="eggNOG" id="arCOG04152">
    <property type="taxonomic scope" value="Archaea"/>
</dbReference>
<dbReference type="HOGENOM" id="CLU_075726_1_0_2"/>
<dbReference type="Proteomes" id="UP000001018">
    <property type="component" value="Chromosome"/>
</dbReference>
<dbReference type="GO" id="GO:0003677">
    <property type="term" value="F:DNA binding"/>
    <property type="evidence" value="ECO:0007669"/>
    <property type="project" value="UniProtKB-KW"/>
</dbReference>
<dbReference type="GO" id="GO:0003700">
    <property type="term" value="F:DNA-binding transcription factor activity"/>
    <property type="evidence" value="ECO:0007669"/>
    <property type="project" value="UniProtKB-UniRule"/>
</dbReference>
<dbReference type="CDD" id="cd00093">
    <property type="entry name" value="HTH_XRE"/>
    <property type="match status" value="1"/>
</dbReference>
<dbReference type="Gene3D" id="1.10.260.40">
    <property type="entry name" value="lambda repressor-like DNA-binding domains"/>
    <property type="match status" value="1"/>
</dbReference>
<dbReference type="HAMAP" id="MF_00584">
    <property type="entry name" value="HTH_type_cro_C1"/>
    <property type="match status" value="1"/>
</dbReference>
<dbReference type="InterPro" id="IPR020886">
    <property type="entry name" value="Arc_TR_HTH"/>
</dbReference>
<dbReference type="InterPro" id="IPR001387">
    <property type="entry name" value="Cro/C1-type_HTH"/>
</dbReference>
<dbReference type="InterPro" id="IPR010982">
    <property type="entry name" value="Lambda_DNA-bd_dom_sf"/>
</dbReference>
<dbReference type="Pfam" id="PF01381">
    <property type="entry name" value="HTH_3"/>
    <property type="match status" value="1"/>
</dbReference>
<dbReference type="SMART" id="SM00530">
    <property type="entry name" value="HTH_XRE"/>
    <property type="match status" value="1"/>
</dbReference>
<dbReference type="SUPFAM" id="SSF47413">
    <property type="entry name" value="lambda repressor-like DNA-binding domains"/>
    <property type="match status" value="1"/>
</dbReference>
<dbReference type="PROSITE" id="PS50943">
    <property type="entry name" value="HTH_CROC1"/>
    <property type="match status" value="1"/>
</dbReference>
<organism>
    <name type="scientific">Sulfolobus acidocaldarius (strain ATCC 33909 / DSM 639 / JCM 8929 / NBRC 15157 / NCIMB 11770)</name>
    <dbReference type="NCBI Taxonomy" id="330779"/>
    <lineage>
        <taxon>Archaea</taxon>
        <taxon>Thermoproteota</taxon>
        <taxon>Thermoprotei</taxon>
        <taxon>Sulfolobales</taxon>
        <taxon>Sulfolobaceae</taxon>
        <taxon>Sulfolobus</taxon>
    </lineage>
</organism>
<sequence>MVTISDVANLLSRNTINYSIIDYPEKKKSIDIITEEQNDKRRILVLKINNSTSDRRNFRILFDLKKISEVTESLPLIIDDNIEDDVVSEKDGVFSMNLYTLERSLRGEKIFLLKTRGGIFVRVDSKKLREKREEKNMSLGELSQRLGVSRISVYDYEKEDSYVSIEVAEKLIEIFGDEVIGDIIKDYDSNTKKKKELQSDYNEEVKILEKLDRVLSDANYKTVKFNFTAIDMAAIKGSEKLIFCTEVNTLANSLKKFNEANKIASKINAKLLVIAKSSKTSKVYEKENFNVYIYNDIDKVVDESS</sequence>
<feature type="chain" id="PRO_0000144865" description="Putative HTH-type transcriptional regulatory protein Saci_1344">
    <location>
        <begin position="1"/>
        <end position="305"/>
    </location>
</feature>
<feature type="domain" description="HTH cro/C1-type" evidence="1">
    <location>
        <begin position="128"/>
        <end position="183"/>
    </location>
</feature>
<feature type="DNA-binding region" description="H-T-H motif" evidence="1">
    <location>
        <begin position="139"/>
        <end position="158"/>
    </location>
</feature>
<reference key="1">
    <citation type="journal article" date="2005" name="J. Bacteriol.">
        <title>The genome of Sulfolobus acidocaldarius, a model organism of the Crenarchaeota.</title>
        <authorList>
            <person name="Chen L."/>
            <person name="Bruegger K."/>
            <person name="Skovgaard M."/>
            <person name="Redder P."/>
            <person name="She Q."/>
            <person name="Torarinsson E."/>
            <person name="Greve B."/>
            <person name="Awayez M."/>
            <person name="Zibat A."/>
            <person name="Klenk H.-P."/>
            <person name="Garrett R.A."/>
        </authorList>
    </citation>
    <scope>NUCLEOTIDE SEQUENCE [LARGE SCALE GENOMIC DNA]</scope>
    <source>
        <strain>ATCC 33909 / DSM 639 / JCM 8929 / NBRC 15157 / NCIMB 11770</strain>
    </source>
</reference>
<proteinExistence type="inferred from homology"/>
<gene>
    <name type="ordered locus">Saci_1344</name>
</gene>